<protein>
    <recommendedName>
        <fullName evidence="9">3-epi-6-deoxocathasterone 23-monooxygenase CYP90C1</fullName>
        <shortName evidence="7">3-dehydro-6-deoxoteasterone</shortName>
        <ecNumber evidence="5">1.14.14.147</ecNumber>
    </recommendedName>
    <alternativeName>
        <fullName evidence="7">(22R,23R)-22,23-dihydroxy-campest-4-en-3-one synthase</fullName>
        <ecNumber evidence="5">1.14.14.-</ecNumber>
    </alternativeName>
    <alternativeName>
        <fullName evidence="7">(22R,23R)-22,23-dihydroxycampesterol synthase</fullName>
        <ecNumber evidence="5">1.14.14.-</ecNumber>
    </alternativeName>
    <alternativeName>
        <fullName evidence="7">6-deoxoteasterone synthase</fullName>
        <ecNumber evidence="5">1.14.14.-</ecNumber>
    </alternativeName>
    <alternativeName>
        <fullName evidence="8">Cytochrome P450 90C1</fullName>
    </alternativeName>
    <alternativeName>
        <fullName evidence="8">Protein ROTUNDIFOLIA 3</fullName>
    </alternativeName>
    <alternativeName>
        <fullName evidence="7">Teasterone synthase</fullName>
        <ecNumber evidence="5">1.14.14.-</ecNumber>
    </alternativeName>
</protein>
<name>C90C1_ARATH</name>
<sequence>MQPPASAGLFRSPENLPWPYNYMDYLVAGFLVLTAGILLRPWLWLRLRNSKTKDGDEEEDNEEKKKGMIPNGSLGWPVIGETLNFIACGYSSRPVTFMDKRKSLYGKVFKTNIIGTPIIISTDAEVNKVVLQNHGNTFVPAYPKSITELLGENSILSINGPHQKRLHTLIGAFLRSPHLKDRITRDIEASVVLTLASWAQLPLVHVQDEIKKMTFEILVKVLMSTSPGEDMNILKLEFEEFIKGLICIPIKFPGTRLYKSLKAKERLIKMVKKVVEERQVAMTTTSPANDVVDVLLRDGGDSEKQSQPSDFVSGKIVEMMIPGEETMPTAMTLAVKFLSDNPVALAKLVEENMEMKRRKLELGEEYKWTDYMSLSFTQNVINETLRMANIINGVWRKALKDVEIKGYLIPKGWCVLASFISVHMDEDIYDNPYQFDPWRWDRINGSANSSICFTPFGGGQRLCPGLELSKLEISIFLHHLVTRYSWTAEEDEIVSFPTVKMKRRLPIRVATVDDSASPISLEDH</sequence>
<reference key="1">
    <citation type="journal article" date="1998" name="Genes Dev.">
        <title>The ROTUNDIFOLIA3 gene of Arabidopsis thaliana encodes a new member of the cytochrome P-450 family that is required for the regulated polar elongation of leaf cells.</title>
        <authorList>
            <person name="Kim G.-T."/>
            <person name="Tsukaya H."/>
            <person name="Uchimiya H."/>
        </authorList>
    </citation>
    <scope>NUCLEOTIDE SEQUENCE [MRNA]</scope>
    <scope>FUNCTION</scope>
    <scope>TISSUE SPECIFICITY</scope>
    <scope>DISRUPTION PHENOTYPE</scope>
    <source>
        <strain>cv. Wassilewskija</strain>
    </source>
</reference>
<reference key="2">
    <citation type="journal article" date="1998" name="Nature">
        <title>Analysis of 1.9 Mb of contiguous sequence from chromosome 4 of Arabidopsis thaliana.</title>
        <authorList>
            <person name="Bevan M."/>
            <person name="Bancroft I."/>
            <person name="Bent E."/>
            <person name="Love K."/>
            <person name="Goodman H.M."/>
            <person name="Dean C."/>
            <person name="Bergkamp R."/>
            <person name="Dirkse W."/>
            <person name="van Staveren M."/>
            <person name="Stiekema W."/>
            <person name="Drost L."/>
            <person name="Ridley P."/>
            <person name="Hudson S.-A."/>
            <person name="Patel K."/>
            <person name="Murphy G."/>
            <person name="Piffanelli P."/>
            <person name="Wedler H."/>
            <person name="Wedler E."/>
            <person name="Wambutt R."/>
            <person name="Weitzenegger T."/>
            <person name="Pohl T."/>
            <person name="Terryn N."/>
            <person name="Gielen J."/>
            <person name="Villarroel R."/>
            <person name="De Clercq R."/>
            <person name="van Montagu M."/>
            <person name="Lecharny A."/>
            <person name="Aubourg S."/>
            <person name="Gy I."/>
            <person name="Kreis M."/>
            <person name="Lao N."/>
            <person name="Kavanagh T."/>
            <person name="Hempel S."/>
            <person name="Kotter P."/>
            <person name="Entian K.-D."/>
            <person name="Rieger M."/>
            <person name="Schaefer M."/>
            <person name="Funk B."/>
            <person name="Mueller-Auer S."/>
            <person name="Silvey M."/>
            <person name="James R."/>
            <person name="Monfort A."/>
            <person name="Pons A."/>
            <person name="Puigdomenech P."/>
            <person name="Douka A."/>
            <person name="Voukelatou E."/>
            <person name="Milioni D."/>
            <person name="Hatzopoulos P."/>
            <person name="Piravandi E."/>
            <person name="Obermaier B."/>
            <person name="Hilbert H."/>
            <person name="Duesterhoeft A."/>
            <person name="Moores T."/>
            <person name="Jones J.D.G."/>
            <person name="Eneva T."/>
            <person name="Palme K."/>
            <person name="Benes V."/>
            <person name="Rechmann S."/>
            <person name="Ansorge W."/>
            <person name="Cooke R."/>
            <person name="Berger C."/>
            <person name="Delseny M."/>
            <person name="Voet M."/>
            <person name="Volckaert G."/>
            <person name="Mewes H.-W."/>
            <person name="Klosterman S."/>
            <person name="Schueller C."/>
            <person name="Chalwatzis N."/>
        </authorList>
    </citation>
    <scope>NUCLEOTIDE SEQUENCE [LARGE SCALE GENOMIC DNA]</scope>
    <source>
        <strain>cv. Columbia</strain>
    </source>
</reference>
<reference key="3">
    <citation type="journal article" date="1999" name="Nature">
        <title>Sequence and analysis of chromosome 4 of the plant Arabidopsis thaliana.</title>
        <authorList>
            <person name="Mayer K.F.X."/>
            <person name="Schueller C."/>
            <person name="Wambutt R."/>
            <person name="Murphy G."/>
            <person name="Volckaert G."/>
            <person name="Pohl T."/>
            <person name="Duesterhoeft A."/>
            <person name="Stiekema W."/>
            <person name="Entian K.-D."/>
            <person name="Terryn N."/>
            <person name="Harris B."/>
            <person name="Ansorge W."/>
            <person name="Brandt P."/>
            <person name="Grivell L.A."/>
            <person name="Rieger M."/>
            <person name="Weichselgartner M."/>
            <person name="de Simone V."/>
            <person name="Obermaier B."/>
            <person name="Mache R."/>
            <person name="Mueller M."/>
            <person name="Kreis M."/>
            <person name="Delseny M."/>
            <person name="Puigdomenech P."/>
            <person name="Watson M."/>
            <person name="Schmidtheini T."/>
            <person name="Reichert B."/>
            <person name="Portetelle D."/>
            <person name="Perez-Alonso M."/>
            <person name="Boutry M."/>
            <person name="Bancroft I."/>
            <person name="Vos P."/>
            <person name="Hoheisel J."/>
            <person name="Zimmermann W."/>
            <person name="Wedler H."/>
            <person name="Ridley P."/>
            <person name="Langham S.-A."/>
            <person name="McCullagh B."/>
            <person name="Bilham L."/>
            <person name="Robben J."/>
            <person name="van der Schueren J."/>
            <person name="Grymonprez B."/>
            <person name="Chuang Y.-J."/>
            <person name="Vandenbussche F."/>
            <person name="Braeken M."/>
            <person name="Weltjens I."/>
            <person name="Voet M."/>
            <person name="Bastiaens I."/>
            <person name="Aert R."/>
            <person name="Defoor E."/>
            <person name="Weitzenegger T."/>
            <person name="Bothe G."/>
            <person name="Ramsperger U."/>
            <person name="Hilbert H."/>
            <person name="Braun M."/>
            <person name="Holzer E."/>
            <person name="Brandt A."/>
            <person name="Peters S."/>
            <person name="van Staveren M."/>
            <person name="Dirkse W."/>
            <person name="Mooijman P."/>
            <person name="Klein Lankhorst R."/>
            <person name="Rose M."/>
            <person name="Hauf J."/>
            <person name="Koetter P."/>
            <person name="Berneiser S."/>
            <person name="Hempel S."/>
            <person name="Feldpausch M."/>
            <person name="Lamberth S."/>
            <person name="Van den Daele H."/>
            <person name="De Keyser A."/>
            <person name="Buysshaert C."/>
            <person name="Gielen J."/>
            <person name="Villarroel R."/>
            <person name="De Clercq R."/>
            <person name="van Montagu M."/>
            <person name="Rogers J."/>
            <person name="Cronin A."/>
            <person name="Quail M.A."/>
            <person name="Bray-Allen S."/>
            <person name="Clark L."/>
            <person name="Doggett J."/>
            <person name="Hall S."/>
            <person name="Kay M."/>
            <person name="Lennard N."/>
            <person name="McLay K."/>
            <person name="Mayes R."/>
            <person name="Pettett A."/>
            <person name="Rajandream M.A."/>
            <person name="Lyne M."/>
            <person name="Benes V."/>
            <person name="Rechmann S."/>
            <person name="Borkova D."/>
            <person name="Bloecker H."/>
            <person name="Scharfe M."/>
            <person name="Grimm M."/>
            <person name="Loehnert T.-H."/>
            <person name="Dose S."/>
            <person name="de Haan M."/>
            <person name="Maarse A.C."/>
            <person name="Schaefer M."/>
            <person name="Mueller-Auer S."/>
            <person name="Gabel C."/>
            <person name="Fuchs M."/>
            <person name="Fartmann B."/>
            <person name="Granderath K."/>
            <person name="Dauner D."/>
            <person name="Herzl A."/>
            <person name="Neumann S."/>
            <person name="Argiriou A."/>
            <person name="Vitale D."/>
            <person name="Liguori R."/>
            <person name="Piravandi E."/>
            <person name="Massenet O."/>
            <person name="Quigley F."/>
            <person name="Clabauld G."/>
            <person name="Muendlein A."/>
            <person name="Felber R."/>
            <person name="Schnabl S."/>
            <person name="Hiller R."/>
            <person name="Schmidt W."/>
            <person name="Lecharny A."/>
            <person name="Aubourg S."/>
            <person name="Chefdor F."/>
            <person name="Cooke R."/>
            <person name="Berger C."/>
            <person name="Monfort A."/>
            <person name="Casacuberta E."/>
            <person name="Gibbons T."/>
            <person name="Weber N."/>
            <person name="Vandenbol M."/>
            <person name="Bargues M."/>
            <person name="Terol J."/>
            <person name="Torres A."/>
            <person name="Perez-Perez A."/>
            <person name="Purnelle B."/>
            <person name="Bent E."/>
            <person name="Johnson S."/>
            <person name="Tacon D."/>
            <person name="Jesse T."/>
            <person name="Heijnen L."/>
            <person name="Schwarz S."/>
            <person name="Scholler P."/>
            <person name="Heber S."/>
            <person name="Francs P."/>
            <person name="Bielke C."/>
            <person name="Frishman D."/>
            <person name="Haase D."/>
            <person name="Lemcke K."/>
            <person name="Mewes H.-W."/>
            <person name="Stocker S."/>
            <person name="Zaccaria P."/>
            <person name="Bevan M."/>
            <person name="Wilson R.K."/>
            <person name="de la Bastide M."/>
            <person name="Habermann K."/>
            <person name="Parnell L."/>
            <person name="Dedhia N."/>
            <person name="Gnoj L."/>
            <person name="Schutz K."/>
            <person name="Huang E."/>
            <person name="Spiegel L."/>
            <person name="Sekhon M."/>
            <person name="Murray J."/>
            <person name="Sheet P."/>
            <person name="Cordes M."/>
            <person name="Abu-Threideh J."/>
            <person name="Stoneking T."/>
            <person name="Kalicki J."/>
            <person name="Graves T."/>
            <person name="Harmon G."/>
            <person name="Edwards J."/>
            <person name="Latreille P."/>
            <person name="Courtney L."/>
            <person name="Cloud J."/>
            <person name="Abbott A."/>
            <person name="Scott K."/>
            <person name="Johnson D."/>
            <person name="Minx P."/>
            <person name="Bentley D."/>
            <person name="Fulton B."/>
            <person name="Miller N."/>
            <person name="Greco T."/>
            <person name="Kemp K."/>
            <person name="Kramer J."/>
            <person name="Fulton L."/>
            <person name="Mardis E."/>
            <person name="Dante M."/>
            <person name="Pepin K."/>
            <person name="Hillier L.W."/>
            <person name="Nelson J."/>
            <person name="Spieth J."/>
            <person name="Ryan E."/>
            <person name="Andrews S."/>
            <person name="Geisel C."/>
            <person name="Layman D."/>
            <person name="Du H."/>
            <person name="Ali J."/>
            <person name="Berghoff A."/>
            <person name="Jones K."/>
            <person name="Drone K."/>
            <person name="Cotton M."/>
            <person name="Joshu C."/>
            <person name="Antonoiu B."/>
            <person name="Zidanic M."/>
            <person name="Strong C."/>
            <person name="Sun H."/>
            <person name="Lamar B."/>
            <person name="Yordan C."/>
            <person name="Ma P."/>
            <person name="Zhong J."/>
            <person name="Preston R."/>
            <person name="Vil D."/>
            <person name="Shekher M."/>
            <person name="Matero A."/>
            <person name="Shah R."/>
            <person name="Swaby I.K."/>
            <person name="O'Shaughnessy A."/>
            <person name="Rodriguez M."/>
            <person name="Hoffman J."/>
            <person name="Till S."/>
            <person name="Granat S."/>
            <person name="Shohdy N."/>
            <person name="Hasegawa A."/>
            <person name="Hameed A."/>
            <person name="Lodhi M."/>
            <person name="Johnson A."/>
            <person name="Chen E."/>
            <person name="Marra M.A."/>
            <person name="Martienssen R."/>
            <person name="McCombie W.R."/>
        </authorList>
    </citation>
    <scope>NUCLEOTIDE SEQUENCE [LARGE SCALE GENOMIC DNA]</scope>
    <source>
        <strain>cv. Columbia</strain>
    </source>
</reference>
<reference key="4">
    <citation type="journal article" date="2017" name="Plant J.">
        <title>Araport11: a complete reannotation of the Arabidopsis thaliana reference genome.</title>
        <authorList>
            <person name="Cheng C.Y."/>
            <person name="Krishnakumar V."/>
            <person name="Chan A.P."/>
            <person name="Thibaud-Nissen F."/>
            <person name="Schobel S."/>
            <person name="Town C.D."/>
        </authorList>
    </citation>
    <scope>GENOME REANNOTATION</scope>
    <source>
        <strain>cv. Columbia</strain>
    </source>
</reference>
<reference key="5">
    <citation type="submission" date="2006-07" db="EMBL/GenBank/DDBJ databases">
        <title>Large-scale analysis of RIKEN Arabidopsis full-length (RAFL) cDNAs.</title>
        <authorList>
            <person name="Totoki Y."/>
            <person name="Seki M."/>
            <person name="Ishida J."/>
            <person name="Nakajima M."/>
            <person name="Enju A."/>
            <person name="Kamiya A."/>
            <person name="Narusaka M."/>
            <person name="Shin-i T."/>
            <person name="Nakagawa M."/>
            <person name="Sakamoto N."/>
            <person name="Oishi K."/>
            <person name="Kohara Y."/>
            <person name="Kobayashi M."/>
            <person name="Toyoda A."/>
            <person name="Sakaki Y."/>
            <person name="Sakurai T."/>
            <person name="Iida K."/>
            <person name="Akiyama K."/>
            <person name="Satou M."/>
            <person name="Toyoda T."/>
            <person name="Konagaya A."/>
            <person name="Carninci P."/>
            <person name="Kawai J."/>
            <person name="Hayashizaki Y."/>
            <person name="Shinozaki K."/>
        </authorList>
    </citation>
    <scope>NUCLEOTIDE SEQUENCE [LARGE SCALE MRNA]</scope>
    <source>
        <strain>cv. Columbia</strain>
    </source>
</reference>
<reference key="6">
    <citation type="submission" date="2006-10" db="EMBL/GenBank/DDBJ databases">
        <title>Arabidopsis ORF clones.</title>
        <authorList>
            <person name="Quinitio C."/>
            <person name="Chen H."/>
            <person name="Kim C.J."/>
            <person name="Shinn P."/>
            <person name="Ecker J.R."/>
        </authorList>
    </citation>
    <scope>NUCLEOTIDE SEQUENCE [LARGE SCALE MRNA]</scope>
    <source>
        <strain>cv. Columbia</strain>
    </source>
</reference>
<reference key="7">
    <citation type="journal article" date="1999" name="Proc. Natl. Acad. Sci. U.S.A.">
        <title>Changes in the shapes of leaves and flowers upon overexpression of cytochrome P450 in Arabidopsis.</title>
        <authorList>
            <person name="Kim G.T."/>
            <person name="Tsukaya H."/>
            <person name="Saito Y."/>
            <person name="Uchimiya H."/>
        </authorList>
    </citation>
    <scope>FUNCTION</scope>
</reference>
<reference key="8">
    <citation type="journal article" date="2005" name="Plant J.">
        <title>CYP90C1 and CYP90D1 are involved in different steps in the brassinosteroid biosynthesis pathway in Arabidopsis thaliana.</title>
        <authorList>
            <person name="Kim G.T."/>
            <person name="Fujioka S."/>
            <person name="Kozuka T."/>
            <person name="Tax F.E."/>
            <person name="Takatsuto S."/>
            <person name="Yoshida S."/>
            <person name="Tsukaya H."/>
        </authorList>
    </citation>
    <scope>FUNCTION</scope>
    <scope>TISSUE SPECIFICITY</scope>
</reference>
<reference key="9">
    <citation type="journal article" date="2006" name="Plant Cell">
        <title>C-23 hydroxylation by Arabidopsis CYP90C1 and CYP90D1 reveals a novel shortcut in brassinosteroid biosynthesis.</title>
        <authorList>
            <person name="Ohnishi T."/>
            <person name="Szatmari A.M."/>
            <person name="Watanabe B."/>
            <person name="Fujita S."/>
            <person name="Bancos S."/>
            <person name="Koncz C."/>
            <person name="Lafos M."/>
            <person name="Shibata K."/>
            <person name="Yokota T."/>
            <person name="Sakata K."/>
            <person name="Szekeres M."/>
            <person name="Mizutani M."/>
        </authorList>
    </citation>
    <scope>FUNCTION</scope>
    <scope>CATALYTIC ACTIVITY</scope>
    <scope>BIOPHYSICOCHEMICAL PROPERTIES</scope>
</reference>
<dbReference type="EC" id="1.14.14.147" evidence="5"/>
<dbReference type="EC" id="1.14.14.-" evidence="5"/>
<dbReference type="EMBL" id="AB008097">
    <property type="protein sequence ID" value="BAA37167.1"/>
    <property type="molecule type" value="mRNA"/>
</dbReference>
<dbReference type="EMBL" id="Z99708">
    <property type="protein sequence ID" value="CAB16850.1"/>
    <property type="status" value="ALT_INIT"/>
    <property type="molecule type" value="Genomic_DNA"/>
</dbReference>
<dbReference type="EMBL" id="AL022141">
    <property type="protein sequence ID" value="CAA18139.1"/>
    <property type="status" value="ALT_SEQ"/>
    <property type="molecule type" value="Genomic_DNA"/>
</dbReference>
<dbReference type="EMBL" id="AL161589">
    <property type="protein sequence ID" value="CAB80304.1"/>
    <property type="status" value="ALT_INIT"/>
    <property type="molecule type" value="Genomic_DNA"/>
</dbReference>
<dbReference type="EMBL" id="CP002687">
    <property type="protein sequence ID" value="AEE86649.1"/>
    <property type="molecule type" value="Genomic_DNA"/>
</dbReference>
<dbReference type="EMBL" id="AK228126">
    <property type="protein sequence ID" value="BAF00083.1"/>
    <property type="molecule type" value="mRNA"/>
</dbReference>
<dbReference type="EMBL" id="BT029220">
    <property type="protein sequence ID" value="ABJ17155.1"/>
    <property type="molecule type" value="mRNA"/>
</dbReference>
<dbReference type="PIR" id="D85429">
    <property type="entry name" value="D85429"/>
</dbReference>
<dbReference type="PIR" id="T04602">
    <property type="entry name" value="T04602"/>
</dbReference>
<dbReference type="RefSeq" id="NP_568002.1">
    <property type="nucleotide sequence ID" value="NM_119801.4"/>
</dbReference>
<dbReference type="SMR" id="Q9M066"/>
<dbReference type="FunCoup" id="Q9M066">
    <property type="interactions" value="192"/>
</dbReference>
<dbReference type="STRING" id="3702.Q9M066"/>
<dbReference type="iPTMnet" id="Q9M066"/>
<dbReference type="PaxDb" id="3702-AT4G36380.1"/>
<dbReference type="ProteomicsDB" id="239144"/>
<dbReference type="EnsemblPlants" id="AT4G36380.1">
    <property type="protein sequence ID" value="AT4G36380.1"/>
    <property type="gene ID" value="AT4G36380"/>
</dbReference>
<dbReference type="GeneID" id="829790"/>
<dbReference type="Gramene" id="AT4G36380.1">
    <property type="protein sequence ID" value="AT4G36380.1"/>
    <property type="gene ID" value="AT4G36380"/>
</dbReference>
<dbReference type="KEGG" id="ath:AT4G36380"/>
<dbReference type="Araport" id="AT4G36380"/>
<dbReference type="TAIR" id="AT4G36380">
    <property type="gene designation" value="ROT3"/>
</dbReference>
<dbReference type="eggNOG" id="KOG0157">
    <property type="taxonomic scope" value="Eukaryota"/>
</dbReference>
<dbReference type="HOGENOM" id="CLU_001570_15_5_1"/>
<dbReference type="InParanoid" id="Q9M066"/>
<dbReference type="OMA" id="FIPCYPK"/>
<dbReference type="OrthoDB" id="3945418at2759"/>
<dbReference type="PhylomeDB" id="Q9M066"/>
<dbReference type="BioCyc" id="ARA:AT4G36380-MONOMER"/>
<dbReference type="BioCyc" id="MetaCyc:AT4G36380-MONOMER"/>
<dbReference type="BRENDA" id="1.14.14.147">
    <property type="organism ID" value="399"/>
</dbReference>
<dbReference type="SABIO-RK" id="Q9M066"/>
<dbReference type="UniPathway" id="UPA00381"/>
<dbReference type="PRO" id="PR:Q9M066"/>
<dbReference type="Proteomes" id="UP000006548">
    <property type="component" value="Chromosome 4"/>
</dbReference>
<dbReference type="ExpressionAtlas" id="Q9M066">
    <property type="expression patterns" value="baseline and differential"/>
</dbReference>
<dbReference type="GO" id="GO:0005789">
    <property type="term" value="C:endoplasmic reticulum membrane"/>
    <property type="evidence" value="ECO:0007669"/>
    <property type="project" value="UniProtKB-SubCell"/>
</dbReference>
<dbReference type="GO" id="GO:0102097">
    <property type="term" value="F:22alpha-hydroxysteroid 23-monooxygenase activity"/>
    <property type="evidence" value="ECO:0007669"/>
    <property type="project" value="UniProtKB-EC"/>
</dbReference>
<dbReference type="GO" id="GO:0020037">
    <property type="term" value="F:heme binding"/>
    <property type="evidence" value="ECO:0007669"/>
    <property type="project" value="InterPro"/>
</dbReference>
<dbReference type="GO" id="GO:0005506">
    <property type="term" value="F:iron ion binding"/>
    <property type="evidence" value="ECO:0007669"/>
    <property type="project" value="InterPro"/>
</dbReference>
<dbReference type="GO" id="GO:0016709">
    <property type="term" value="F:oxidoreductase activity, acting on paired donors, with incorporation or reduction of molecular oxygen, NAD(P)H as one donor, and incorporation of one atom of oxygen"/>
    <property type="evidence" value="ECO:0000314"/>
    <property type="project" value="TAIR"/>
</dbReference>
<dbReference type="GO" id="GO:0016132">
    <property type="term" value="P:brassinosteroid biosynthetic process"/>
    <property type="evidence" value="ECO:0000315"/>
    <property type="project" value="TAIR"/>
</dbReference>
<dbReference type="GO" id="GO:0010268">
    <property type="term" value="P:brassinosteroid homeostasis"/>
    <property type="evidence" value="ECO:0000270"/>
    <property type="project" value="TAIR"/>
</dbReference>
<dbReference type="GO" id="GO:0048366">
    <property type="term" value="P:leaf development"/>
    <property type="evidence" value="ECO:0000316"/>
    <property type="project" value="TAIR"/>
</dbReference>
<dbReference type="GO" id="GO:0009965">
    <property type="term" value="P:leaf morphogenesis"/>
    <property type="evidence" value="ECO:0000315"/>
    <property type="project" value="TAIR"/>
</dbReference>
<dbReference type="GO" id="GO:0042814">
    <property type="term" value="P:monopolar cell growth"/>
    <property type="evidence" value="ECO:0000315"/>
    <property type="project" value="TAIR"/>
</dbReference>
<dbReference type="GO" id="GO:0048441">
    <property type="term" value="P:petal development"/>
    <property type="evidence" value="ECO:0000316"/>
    <property type="project" value="TAIR"/>
</dbReference>
<dbReference type="GO" id="GO:0048443">
    <property type="term" value="P:stamen development"/>
    <property type="evidence" value="ECO:0000316"/>
    <property type="project" value="TAIR"/>
</dbReference>
<dbReference type="CDD" id="cd11043">
    <property type="entry name" value="CYP90-like"/>
    <property type="match status" value="1"/>
</dbReference>
<dbReference type="FunFam" id="1.10.630.10:FF:000048">
    <property type="entry name" value="3-epi-6-deoxocathasterone 23-monooxygenase CYP90D1"/>
    <property type="match status" value="1"/>
</dbReference>
<dbReference type="Gene3D" id="1.10.630.10">
    <property type="entry name" value="Cytochrome P450"/>
    <property type="match status" value="1"/>
</dbReference>
<dbReference type="InterPro" id="IPR001128">
    <property type="entry name" value="Cyt_P450"/>
</dbReference>
<dbReference type="InterPro" id="IPR017972">
    <property type="entry name" value="Cyt_P450_CS"/>
</dbReference>
<dbReference type="InterPro" id="IPR002403">
    <property type="entry name" value="Cyt_P450_E_grp-IV"/>
</dbReference>
<dbReference type="InterPro" id="IPR036396">
    <property type="entry name" value="Cyt_P450_sf"/>
</dbReference>
<dbReference type="PANTHER" id="PTHR24286:SF254">
    <property type="entry name" value="3-EPI-6-DEOXOCATHASTERONE 23-MONOOXYGENASE CYP90C1"/>
    <property type="match status" value="1"/>
</dbReference>
<dbReference type="PANTHER" id="PTHR24286">
    <property type="entry name" value="CYTOCHROME P450 26"/>
    <property type="match status" value="1"/>
</dbReference>
<dbReference type="Pfam" id="PF00067">
    <property type="entry name" value="p450"/>
    <property type="match status" value="1"/>
</dbReference>
<dbReference type="PRINTS" id="PR00465">
    <property type="entry name" value="EP450IV"/>
</dbReference>
<dbReference type="PRINTS" id="PR00385">
    <property type="entry name" value="P450"/>
</dbReference>
<dbReference type="SUPFAM" id="SSF48264">
    <property type="entry name" value="Cytochrome P450"/>
    <property type="match status" value="1"/>
</dbReference>
<dbReference type="PROSITE" id="PS00086">
    <property type="entry name" value="CYTOCHROME_P450"/>
    <property type="match status" value="1"/>
</dbReference>
<keyword id="KW-1069">Brassinosteroid biosynthesis</keyword>
<keyword id="KW-0256">Endoplasmic reticulum</keyword>
<keyword id="KW-0349">Heme</keyword>
<keyword id="KW-0408">Iron</keyword>
<keyword id="KW-0444">Lipid biosynthesis</keyword>
<keyword id="KW-0443">Lipid metabolism</keyword>
<keyword id="KW-0472">Membrane</keyword>
<keyword id="KW-0479">Metal-binding</keyword>
<keyword id="KW-0503">Monooxygenase</keyword>
<keyword id="KW-0560">Oxidoreductase</keyword>
<keyword id="KW-1185">Reference proteome</keyword>
<keyword id="KW-0752">Steroid biosynthesis</keyword>
<keyword id="KW-0812">Transmembrane</keyword>
<keyword id="KW-1133">Transmembrane helix</keyword>
<comment type="function">
    <text evidence="3 4 5 6">Involved in brassinosteroid (BR) biosynthesis (PubMed:15703058, PubMed:17138693). Converts typhasterol (TY) to cathasterone (CS) and 6-deoxotyphasterol (6-deoxoTY) to 6-deoxocathasterone (6-deoxoCT) (PubMed:15703058). C-23 hydroxylase that converts directly (22S,24R)-22-hydroxy-5-alpha-ergostan-3-one and 3-epi-6-deoxocathasterone to 3-dehydro-6-deoxoteasterone (6-deoxo3DT, 6-deoxo3DHT) and 6-deoxotyphasterol (6-deoxoTY), respectively (PubMed:17138693). These C-23 hydroxylation shortcuts bypass campestanol, 6-deoxocathasterone, and 6-deoxoteasterone (6-deoxoTE) (PubMed:17138693). Also catalyzes the conversion of cathasterone to teasterone (TE), (22S,24R)-22-hydroxyergost-4-en-3-one (22-OH-4-en-3-one) to (22R,23R)-22,23-dihydroxy-campest-4-en-3-one (22,23-diOH-4-en-3-one) and (22S)-22-hydroxycampesterol (22-OHCR) to (22R,23R)-22,23-dihydroxycampesterol (22,23-diOHCR) (PubMed:17138693). Required for the regulation of polar elongation of leaf cells (PubMed:10430960, PubMed:9694802). Required for the longitudinal elongation of floral organs (PubMed:10430960).</text>
</comment>
<comment type="catalytic activity">
    <reaction evidence="5">
        <text>3-epi-6-deoxocathasterone + reduced [NADPH--hemoprotein reductase] + O2 = 6-deoxotyphasterol + oxidized [NADPH--hemoprotein reductase] + H2O + H(+)</text>
        <dbReference type="Rhea" id="RHEA:27321"/>
        <dbReference type="Rhea" id="RHEA-COMP:11964"/>
        <dbReference type="Rhea" id="RHEA-COMP:11965"/>
        <dbReference type="ChEBI" id="CHEBI:15377"/>
        <dbReference type="ChEBI" id="CHEBI:15378"/>
        <dbReference type="ChEBI" id="CHEBI:15379"/>
        <dbReference type="ChEBI" id="CHEBI:20717"/>
        <dbReference type="ChEBI" id="CHEBI:57618"/>
        <dbReference type="ChEBI" id="CHEBI:58210"/>
        <dbReference type="ChEBI" id="CHEBI:59410"/>
        <dbReference type="EC" id="1.14.14.147"/>
    </reaction>
</comment>
<comment type="catalytic activity">
    <reaction evidence="5">
        <text>(22S,24R)-22-hydroxy-5alpha-ergostan-3-one + reduced [NADPH--hemoprotein reductase] + O2 = 3-dehydro-6-deoxoteasterone + oxidized [NADPH--hemoprotein reductase] + H2O + H(+)</text>
        <dbReference type="Rhea" id="RHEA:27325"/>
        <dbReference type="Rhea" id="RHEA-COMP:11964"/>
        <dbReference type="Rhea" id="RHEA-COMP:11965"/>
        <dbReference type="ChEBI" id="CHEBI:15377"/>
        <dbReference type="ChEBI" id="CHEBI:15378"/>
        <dbReference type="ChEBI" id="CHEBI:15379"/>
        <dbReference type="ChEBI" id="CHEBI:20710"/>
        <dbReference type="ChEBI" id="CHEBI:57618"/>
        <dbReference type="ChEBI" id="CHEBI:58210"/>
        <dbReference type="ChEBI" id="CHEBI:59411"/>
        <dbReference type="EC" id="1.14.14.147"/>
    </reaction>
</comment>
<comment type="cofactor">
    <cofactor evidence="1">
        <name>heme</name>
        <dbReference type="ChEBI" id="CHEBI:30413"/>
    </cofactor>
</comment>
<comment type="biophysicochemical properties">
    <kinetics>
        <KM evidence="5">19.4 uM for (22S)-22-hydroxycampesterol</KM>
        <KM evidence="5">8.61 uM for (22S,24R)-22-hydroxy-5-alpha-ergostan-3-one</KM>
        <KM evidence="5">4.94 uM for (22S,24R)-22-hydroxyergost-4-en-3-one</KM>
        <KM evidence="5">6.61 uM for 3-epi-6-deoxocathasterone</KM>
        <KM evidence="5">35.9 uM for 6-deoxocathasterone</KM>
        <text evidence="5">kcat is 0.11 min(-1) for (22S)-22-hydroxycampesterol (PubMed:17138693). kcat is 2.75 min(-1) for (22S,24R)-22-hydroxy-5-alpha-ergostan-3-one (PubMed:17138693). kcat is 1.40 min(-1) for (22S,24R)-22-hydroxyergost-4-en-3-one (PubMed:17138693). kcat is 3.01 min(-1) for 3-epi-6-deoxocathasterone (PubMed:17138693). kcat is 0.14 min(-1) for 6-deoxocathasterone (PubMed:17138693).</text>
    </kinetics>
</comment>
<comment type="pathway">
    <text evidence="9">Plant hormone biosynthesis; brassinosteroid biosynthesis.</text>
</comment>
<comment type="subcellular location">
    <subcellularLocation>
        <location evidence="9">Endoplasmic reticulum membrane</location>
        <topology evidence="9">Single-pass membrane protein</topology>
    </subcellularLocation>
</comment>
<comment type="tissue specificity">
    <text evidence="4 6">Widely expressed.</text>
</comment>
<comment type="disruption phenotype">
    <text evidence="4 6">Plants with short petioles and round leaves. Altered polar elongation of leaf cells (PubMed:9694802). The double mutant plants cyp90c1 and cyp90d1 exhibit a characteristic brassinosteroid-deficient dwarf phenotype (PubMed:15703058).</text>
</comment>
<comment type="similarity">
    <text evidence="9">Belongs to the cytochrome P450 family.</text>
</comment>
<comment type="sequence caution" evidence="9">
    <conflict type="erroneous gene model prediction">
        <sequence resource="EMBL-CDS" id="CAA18139"/>
    </conflict>
</comment>
<comment type="sequence caution" evidence="9">
    <conflict type="erroneous initiation">
        <sequence resource="EMBL-CDS" id="CAB16850"/>
    </conflict>
    <text>Truncated N-terminus.</text>
</comment>
<comment type="sequence caution" evidence="9">
    <conflict type="erroneous initiation">
        <sequence resource="EMBL-CDS" id="CAB80304"/>
    </conflict>
    <text>Truncated N-terminus.</text>
</comment>
<gene>
    <name evidence="8" type="primary">CYP90C1</name>
    <name evidence="8" type="synonym">ROT3</name>
    <name evidence="10" type="ordered locus">At4g36380</name>
    <name evidence="9" type="ORF">AP22.10</name>
    <name evidence="12" type="ORF">C7A10.980</name>
    <name evidence="11" type="ORF">F23E13.220</name>
</gene>
<proteinExistence type="evidence at protein level"/>
<feature type="chain" id="PRO_0000052186" description="3-epi-6-deoxocathasterone 23-monooxygenase CYP90C1">
    <location>
        <begin position="1"/>
        <end position="524"/>
    </location>
</feature>
<feature type="transmembrane region" description="Helical" evidence="2">
    <location>
        <begin position="25"/>
        <end position="45"/>
    </location>
</feature>
<feature type="binding site" description="axial binding residue" evidence="1">
    <location>
        <position position="463"/>
    </location>
    <ligand>
        <name>heme</name>
        <dbReference type="ChEBI" id="CHEBI:30413"/>
    </ligand>
    <ligandPart>
        <name>Fe</name>
        <dbReference type="ChEBI" id="CHEBI:18248"/>
    </ligandPart>
</feature>
<feature type="sequence conflict" description="In Ref. 1; BAA37167." evidence="9" ref="1">
    <original>L</original>
    <variation>F</variation>
    <location>
        <position position="45"/>
    </location>
</feature>
<feature type="sequence conflict" description="In Ref. 5; BAF00083." evidence="9" ref="5">
    <original>F</original>
    <variation>S</variation>
    <location>
        <position position="252"/>
    </location>
</feature>
<organism>
    <name type="scientific">Arabidopsis thaliana</name>
    <name type="common">Mouse-ear cress</name>
    <dbReference type="NCBI Taxonomy" id="3702"/>
    <lineage>
        <taxon>Eukaryota</taxon>
        <taxon>Viridiplantae</taxon>
        <taxon>Streptophyta</taxon>
        <taxon>Embryophyta</taxon>
        <taxon>Tracheophyta</taxon>
        <taxon>Spermatophyta</taxon>
        <taxon>Magnoliopsida</taxon>
        <taxon>eudicotyledons</taxon>
        <taxon>Gunneridae</taxon>
        <taxon>Pentapetalae</taxon>
        <taxon>rosids</taxon>
        <taxon>malvids</taxon>
        <taxon>Brassicales</taxon>
        <taxon>Brassicaceae</taxon>
        <taxon>Camelineae</taxon>
        <taxon>Arabidopsis</taxon>
    </lineage>
</organism>
<accession>Q9M066</accession>
<accession>O23242</accession>
<accession>Q058J8</accession>
<accession>Q0WS16</accession>
<evidence type="ECO:0000250" key="1">
    <source>
        <dbReference type="UniProtKB" id="Q96242"/>
    </source>
</evidence>
<evidence type="ECO:0000255" key="2"/>
<evidence type="ECO:0000269" key="3">
    <source>
    </source>
</evidence>
<evidence type="ECO:0000269" key="4">
    <source>
    </source>
</evidence>
<evidence type="ECO:0000269" key="5">
    <source>
    </source>
</evidence>
<evidence type="ECO:0000269" key="6">
    <source>
    </source>
</evidence>
<evidence type="ECO:0000303" key="7">
    <source>
    </source>
</evidence>
<evidence type="ECO:0000303" key="8">
    <source>
    </source>
</evidence>
<evidence type="ECO:0000305" key="9"/>
<evidence type="ECO:0000312" key="10">
    <source>
        <dbReference type="Araport" id="AT4G36380"/>
    </source>
</evidence>
<evidence type="ECO:0000312" key="11">
    <source>
        <dbReference type="EMBL" id="CAA18139.1"/>
    </source>
</evidence>
<evidence type="ECO:0000312" key="12">
    <source>
        <dbReference type="EMBL" id="CAB16850.1"/>
    </source>
</evidence>